<reference key="1">
    <citation type="journal article" date="2007" name="PLoS ONE">
        <title>Analysis of the neurotoxin complex genes in Clostridium botulinum A1-A4 and B1 strains: BoNT/A3, /Ba4 and /B1 clusters are located within plasmids.</title>
        <authorList>
            <person name="Smith T.J."/>
            <person name="Hill K.K."/>
            <person name="Foley B.T."/>
            <person name="Detter J.C."/>
            <person name="Munk A.C."/>
            <person name="Bruce D.C."/>
            <person name="Doggett N.A."/>
            <person name="Smith L.A."/>
            <person name="Marks J.D."/>
            <person name="Xie G."/>
            <person name="Brettin T.S."/>
        </authorList>
    </citation>
    <scope>NUCLEOTIDE SEQUENCE [LARGE SCALE GENOMIC DNA]</scope>
    <source>
        <strain>ATCC 19397 / Type A</strain>
    </source>
</reference>
<comment type="function">
    <text evidence="1">Converts the preformed base xanthine, a product of nucleic acid breakdown, to xanthosine 5'-monophosphate (XMP), so it can be reused for RNA or DNA synthesis.</text>
</comment>
<comment type="catalytic activity">
    <reaction evidence="1">
        <text>XMP + diphosphate = xanthine + 5-phospho-alpha-D-ribose 1-diphosphate</text>
        <dbReference type="Rhea" id="RHEA:10800"/>
        <dbReference type="ChEBI" id="CHEBI:17712"/>
        <dbReference type="ChEBI" id="CHEBI:33019"/>
        <dbReference type="ChEBI" id="CHEBI:57464"/>
        <dbReference type="ChEBI" id="CHEBI:58017"/>
        <dbReference type="EC" id="2.4.2.22"/>
    </reaction>
</comment>
<comment type="pathway">
    <text evidence="1">Purine metabolism; XMP biosynthesis via salvage pathway; XMP from xanthine: step 1/1.</text>
</comment>
<comment type="subunit">
    <text evidence="1">Homodimer.</text>
</comment>
<comment type="subcellular location">
    <subcellularLocation>
        <location evidence="1">Cytoplasm</location>
    </subcellularLocation>
</comment>
<comment type="similarity">
    <text evidence="1">Belongs to the purine/pyrimidine phosphoribosyltransferase family. Xpt subfamily.</text>
</comment>
<keyword id="KW-0963">Cytoplasm</keyword>
<keyword id="KW-0328">Glycosyltransferase</keyword>
<keyword id="KW-0660">Purine salvage</keyword>
<keyword id="KW-0808">Transferase</keyword>
<name>XPT1_CLOB1</name>
<accession>A7FPI7</accession>
<proteinExistence type="inferred from homology"/>
<gene>
    <name evidence="1" type="primary">xpt1</name>
    <name type="ordered locus">CLB_0360</name>
</gene>
<evidence type="ECO:0000255" key="1">
    <source>
        <dbReference type="HAMAP-Rule" id="MF_01184"/>
    </source>
</evidence>
<sequence length="190" mass="21279">MEKLQNRILQEGHALSETVLKVDSFLNHQVDPDLMYEIGTYFKNYFKEHKITKVFTIESSGIAPAVMTAMQMNLPMVILKKQASKILNGDVYQTTVHSFTKGLDYELTLSKKYIAKEDNILIIDDFLANGEAALGAARLVKEAGAKVAGMGIVIEKSFQPGRKMLEDKGYDVYSLARIAKLQKGLIEFVK</sequence>
<organism>
    <name type="scientific">Clostridium botulinum (strain ATCC 19397 / Type A)</name>
    <dbReference type="NCBI Taxonomy" id="441770"/>
    <lineage>
        <taxon>Bacteria</taxon>
        <taxon>Bacillati</taxon>
        <taxon>Bacillota</taxon>
        <taxon>Clostridia</taxon>
        <taxon>Eubacteriales</taxon>
        <taxon>Clostridiaceae</taxon>
        <taxon>Clostridium</taxon>
    </lineage>
</organism>
<protein>
    <recommendedName>
        <fullName evidence="1">Xanthine phosphoribosyltransferase 1</fullName>
        <shortName evidence="1">XPRTase 1</shortName>
        <ecNumber evidence="1">2.4.2.22</ecNumber>
    </recommendedName>
</protein>
<dbReference type="EC" id="2.4.2.22" evidence="1"/>
<dbReference type="EMBL" id="CP000726">
    <property type="protein sequence ID" value="ABS34715.1"/>
    <property type="molecule type" value="Genomic_DNA"/>
</dbReference>
<dbReference type="RefSeq" id="WP_011948106.1">
    <property type="nucleotide sequence ID" value="NC_009697.1"/>
</dbReference>
<dbReference type="SMR" id="A7FPI7"/>
<dbReference type="KEGG" id="cba:CLB_0360"/>
<dbReference type="HOGENOM" id="CLU_099015_0_0_9"/>
<dbReference type="UniPathway" id="UPA00602">
    <property type="reaction ID" value="UER00658"/>
</dbReference>
<dbReference type="GO" id="GO:0005737">
    <property type="term" value="C:cytoplasm"/>
    <property type="evidence" value="ECO:0007669"/>
    <property type="project" value="UniProtKB-SubCell"/>
</dbReference>
<dbReference type="GO" id="GO:0000310">
    <property type="term" value="F:xanthine phosphoribosyltransferase activity"/>
    <property type="evidence" value="ECO:0007669"/>
    <property type="project" value="UniProtKB-UniRule"/>
</dbReference>
<dbReference type="GO" id="GO:0006166">
    <property type="term" value="P:purine ribonucleoside salvage"/>
    <property type="evidence" value="ECO:0007669"/>
    <property type="project" value="UniProtKB-KW"/>
</dbReference>
<dbReference type="GO" id="GO:0046110">
    <property type="term" value="P:xanthine metabolic process"/>
    <property type="evidence" value="ECO:0007669"/>
    <property type="project" value="InterPro"/>
</dbReference>
<dbReference type="GO" id="GO:0032265">
    <property type="term" value="P:XMP salvage"/>
    <property type="evidence" value="ECO:0007669"/>
    <property type="project" value="UniProtKB-UniRule"/>
</dbReference>
<dbReference type="CDD" id="cd06223">
    <property type="entry name" value="PRTases_typeI"/>
    <property type="match status" value="1"/>
</dbReference>
<dbReference type="Gene3D" id="3.40.50.2020">
    <property type="match status" value="1"/>
</dbReference>
<dbReference type="HAMAP" id="MF_01184">
    <property type="entry name" value="XPRTase"/>
    <property type="match status" value="1"/>
</dbReference>
<dbReference type="InterPro" id="IPR000836">
    <property type="entry name" value="PRibTrfase_dom"/>
</dbReference>
<dbReference type="InterPro" id="IPR029057">
    <property type="entry name" value="PRTase-like"/>
</dbReference>
<dbReference type="InterPro" id="IPR050118">
    <property type="entry name" value="Pur/Pyrimidine_PRTase"/>
</dbReference>
<dbReference type="InterPro" id="IPR010079">
    <property type="entry name" value="Xanthine_PRibTrfase"/>
</dbReference>
<dbReference type="NCBIfam" id="NF006671">
    <property type="entry name" value="PRK09219.1"/>
    <property type="match status" value="1"/>
</dbReference>
<dbReference type="NCBIfam" id="TIGR01744">
    <property type="entry name" value="XPRTase"/>
    <property type="match status" value="1"/>
</dbReference>
<dbReference type="PANTHER" id="PTHR43864">
    <property type="entry name" value="HYPOXANTHINE/GUANINE PHOSPHORIBOSYLTRANSFERASE"/>
    <property type="match status" value="1"/>
</dbReference>
<dbReference type="PANTHER" id="PTHR43864:SF1">
    <property type="entry name" value="XANTHINE PHOSPHORIBOSYLTRANSFERASE"/>
    <property type="match status" value="1"/>
</dbReference>
<dbReference type="Pfam" id="PF00156">
    <property type="entry name" value="Pribosyltran"/>
    <property type="match status" value="1"/>
</dbReference>
<dbReference type="SUPFAM" id="SSF53271">
    <property type="entry name" value="PRTase-like"/>
    <property type="match status" value="1"/>
</dbReference>
<feature type="chain" id="PRO_0000339679" description="Xanthine phosphoribosyltransferase 1">
    <location>
        <begin position="1"/>
        <end position="190"/>
    </location>
</feature>
<feature type="binding site" evidence="1">
    <location>
        <position position="20"/>
    </location>
    <ligand>
        <name>xanthine</name>
        <dbReference type="ChEBI" id="CHEBI:17712"/>
    </ligand>
</feature>
<feature type="binding site" evidence="1">
    <location>
        <position position="27"/>
    </location>
    <ligand>
        <name>xanthine</name>
        <dbReference type="ChEBI" id="CHEBI:17712"/>
    </ligand>
</feature>
<feature type="binding site" evidence="1">
    <location>
        <begin position="128"/>
        <end position="132"/>
    </location>
    <ligand>
        <name>5-phospho-alpha-D-ribose 1-diphosphate</name>
        <dbReference type="ChEBI" id="CHEBI:58017"/>
    </ligand>
</feature>
<feature type="binding site" evidence="1">
    <location>
        <position position="156"/>
    </location>
    <ligand>
        <name>xanthine</name>
        <dbReference type="ChEBI" id="CHEBI:17712"/>
    </ligand>
</feature>